<proteinExistence type="inferred from homology"/>
<sequence length="232" mass="23988">MSIAVNMNDPTNTGVKTTTGSGSMTGSNAADLQSSFLTLLVAQLKNQDPTNPLQNNELTTQLAQISTVSGIEKLNTTLGAISGQIDNSQSLQATTLIGHGVMVPGTTILAGKGAEEGAVTSTTPFGVELQQPADKVTATITDKDGRVVRTLEIGELRAGVHTFTWDGKQTDGTTVPNGSYNIAITASNGGTQLVAQPLQFALVQGVTKGSNGNLLDLGTYGTTTLDEVRQII</sequence>
<gene>
    <name type="primary">flgD</name>
    <name type="synonym">fla FIV</name>
    <name type="synonym">flaV</name>
    <name type="ordered locus">STY1215</name>
    <name type="ordered locus">t1744</name>
</gene>
<name>FLGD_SALTI</name>
<comment type="function">
    <text evidence="1">Required for flagellar hook formation. May act as a scaffolding protein (By similarity).</text>
</comment>
<comment type="similarity">
    <text evidence="3">Belongs to the FlgD family.</text>
</comment>
<dbReference type="EMBL" id="AL513382">
    <property type="protein sequence ID" value="CAD08300.1"/>
    <property type="molecule type" value="Genomic_DNA"/>
</dbReference>
<dbReference type="EMBL" id="AE014613">
    <property type="protein sequence ID" value="AAO69368.1"/>
    <property type="molecule type" value="Genomic_DNA"/>
</dbReference>
<dbReference type="RefSeq" id="NP_455669.1">
    <property type="nucleotide sequence ID" value="NC_003198.1"/>
</dbReference>
<dbReference type="RefSeq" id="WP_000020450.1">
    <property type="nucleotide sequence ID" value="NZ_WSUR01000018.1"/>
</dbReference>
<dbReference type="SMR" id="P0A1J0"/>
<dbReference type="STRING" id="220341.gene:17585180"/>
<dbReference type="KEGG" id="stt:t1744"/>
<dbReference type="KEGG" id="sty:STY1215"/>
<dbReference type="PATRIC" id="fig|220341.7.peg.1216"/>
<dbReference type="eggNOG" id="COG1843">
    <property type="taxonomic scope" value="Bacteria"/>
</dbReference>
<dbReference type="HOGENOM" id="CLU_047535_0_0_6"/>
<dbReference type="OMA" id="STYAHVT"/>
<dbReference type="OrthoDB" id="9785233at2"/>
<dbReference type="Proteomes" id="UP000000541">
    <property type="component" value="Chromosome"/>
</dbReference>
<dbReference type="Proteomes" id="UP000002670">
    <property type="component" value="Chromosome"/>
</dbReference>
<dbReference type="GO" id="GO:0044781">
    <property type="term" value="P:bacterial-type flagellum organization"/>
    <property type="evidence" value="ECO:0007669"/>
    <property type="project" value="UniProtKB-KW"/>
</dbReference>
<dbReference type="FunFam" id="2.60.40.4070:FF:000001">
    <property type="entry name" value="Basal-body rod modification protein FlgD"/>
    <property type="match status" value="1"/>
</dbReference>
<dbReference type="Gene3D" id="2.30.30.910">
    <property type="match status" value="1"/>
</dbReference>
<dbReference type="Gene3D" id="2.60.40.4070">
    <property type="match status" value="1"/>
</dbReference>
<dbReference type="InterPro" id="IPR005648">
    <property type="entry name" value="FlgD"/>
</dbReference>
<dbReference type="InterPro" id="IPR025965">
    <property type="entry name" value="FlgD/Vpr_Ig-like"/>
</dbReference>
<dbReference type="InterPro" id="IPR025963">
    <property type="entry name" value="FLgD_Tudor"/>
</dbReference>
<dbReference type="NCBIfam" id="NF005176">
    <property type="entry name" value="PRK06655.1-1"/>
    <property type="match status" value="1"/>
</dbReference>
<dbReference type="Pfam" id="PF03963">
    <property type="entry name" value="FlgD"/>
    <property type="match status" value="1"/>
</dbReference>
<dbReference type="Pfam" id="PF13860">
    <property type="entry name" value="FlgD_ig"/>
    <property type="match status" value="1"/>
</dbReference>
<dbReference type="Pfam" id="PF13861">
    <property type="entry name" value="FLgD_tudor"/>
    <property type="match status" value="1"/>
</dbReference>
<feature type="chain" id="PRO_0000180813" description="Basal-body rod modification protein FlgD">
    <location>
        <begin position="1"/>
        <end position="232"/>
    </location>
</feature>
<feature type="region of interest" description="Disordered" evidence="2">
    <location>
        <begin position="1"/>
        <end position="26"/>
    </location>
</feature>
<feature type="compositionally biased region" description="Low complexity" evidence="2">
    <location>
        <begin position="11"/>
        <end position="26"/>
    </location>
</feature>
<accession>P0A1J0</accession>
<accession>P16321</accession>
<organism>
    <name type="scientific">Salmonella typhi</name>
    <dbReference type="NCBI Taxonomy" id="90370"/>
    <lineage>
        <taxon>Bacteria</taxon>
        <taxon>Pseudomonadati</taxon>
        <taxon>Pseudomonadota</taxon>
        <taxon>Gammaproteobacteria</taxon>
        <taxon>Enterobacterales</taxon>
        <taxon>Enterobacteriaceae</taxon>
        <taxon>Salmonella</taxon>
    </lineage>
</organism>
<evidence type="ECO:0000250" key="1"/>
<evidence type="ECO:0000256" key="2">
    <source>
        <dbReference type="SAM" id="MobiDB-lite"/>
    </source>
</evidence>
<evidence type="ECO:0000305" key="3"/>
<keyword id="KW-1005">Bacterial flagellum biogenesis</keyword>
<reference key="1">
    <citation type="journal article" date="2001" name="Nature">
        <title>Complete genome sequence of a multiple drug resistant Salmonella enterica serovar Typhi CT18.</title>
        <authorList>
            <person name="Parkhill J."/>
            <person name="Dougan G."/>
            <person name="James K.D."/>
            <person name="Thomson N.R."/>
            <person name="Pickard D."/>
            <person name="Wain J."/>
            <person name="Churcher C.M."/>
            <person name="Mungall K.L."/>
            <person name="Bentley S.D."/>
            <person name="Holden M.T.G."/>
            <person name="Sebaihia M."/>
            <person name="Baker S."/>
            <person name="Basham D."/>
            <person name="Brooks K."/>
            <person name="Chillingworth T."/>
            <person name="Connerton P."/>
            <person name="Cronin A."/>
            <person name="Davis P."/>
            <person name="Davies R.M."/>
            <person name="Dowd L."/>
            <person name="White N."/>
            <person name="Farrar J."/>
            <person name="Feltwell T."/>
            <person name="Hamlin N."/>
            <person name="Haque A."/>
            <person name="Hien T.T."/>
            <person name="Holroyd S."/>
            <person name="Jagels K."/>
            <person name="Krogh A."/>
            <person name="Larsen T.S."/>
            <person name="Leather S."/>
            <person name="Moule S."/>
            <person name="O'Gaora P."/>
            <person name="Parry C."/>
            <person name="Quail M.A."/>
            <person name="Rutherford K.M."/>
            <person name="Simmonds M."/>
            <person name="Skelton J."/>
            <person name="Stevens K."/>
            <person name="Whitehead S."/>
            <person name="Barrell B.G."/>
        </authorList>
    </citation>
    <scope>NUCLEOTIDE SEQUENCE [LARGE SCALE GENOMIC DNA]</scope>
    <source>
        <strain>CT18</strain>
    </source>
</reference>
<reference key="2">
    <citation type="journal article" date="2003" name="J. Bacteriol.">
        <title>Comparative genomics of Salmonella enterica serovar Typhi strains Ty2 and CT18.</title>
        <authorList>
            <person name="Deng W."/>
            <person name="Liou S.-R."/>
            <person name="Plunkett G. III"/>
            <person name="Mayhew G.F."/>
            <person name="Rose D.J."/>
            <person name="Burland V."/>
            <person name="Kodoyianni V."/>
            <person name="Schwartz D.C."/>
            <person name="Blattner F.R."/>
        </authorList>
    </citation>
    <scope>NUCLEOTIDE SEQUENCE [LARGE SCALE GENOMIC DNA]</scope>
    <source>
        <strain>ATCC 700931 / Ty2</strain>
    </source>
</reference>
<protein>
    <recommendedName>
        <fullName>Basal-body rod modification protein FlgD</fullName>
    </recommendedName>
</protein>